<reference key="1">
    <citation type="journal article" date="1995" name="Insect Biochem. Mol. Biol.">
        <title>The B proteins secreted by the tubular accessory sex glands of the male mealworm beetle, Tenebrio molitor, have sequence similarity to moth pheromone-binding proteins.</title>
        <authorList>
            <person name="Paesen G.C."/>
            <person name="Happ G.M."/>
        </authorList>
    </citation>
    <scope>NUCLEOTIDE SEQUENCE [MRNA]</scope>
    <source>
        <tissue>Tubular accessory gland</tissue>
    </source>
</reference>
<organism>
    <name type="scientific">Tenebrio molitor</name>
    <name type="common">Yellow mealworm beetle</name>
    <dbReference type="NCBI Taxonomy" id="7067"/>
    <lineage>
        <taxon>Eukaryota</taxon>
        <taxon>Metazoa</taxon>
        <taxon>Ecdysozoa</taxon>
        <taxon>Arthropoda</taxon>
        <taxon>Hexapoda</taxon>
        <taxon>Insecta</taxon>
        <taxon>Pterygota</taxon>
        <taxon>Neoptera</taxon>
        <taxon>Endopterygota</taxon>
        <taxon>Coleoptera</taxon>
        <taxon>Polyphaga</taxon>
        <taxon>Cucujiformia</taxon>
        <taxon>Tenebrionidae</taxon>
        <taxon>Tenebrio</taxon>
    </lineage>
</organism>
<feature type="signal peptide" evidence="2">
    <location>
        <begin position="1" status="less than"/>
        <end position="10"/>
    </location>
</feature>
<feature type="chain" id="PRO_0000012593" description="B2 protein">
    <location>
        <begin position="11"/>
        <end position="128"/>
    </location>
</feature>
<feature type="disulfide bond" evidence="1">
    <location>
        <begin position="26"/>
        <end position="57"/>
    </location>
</feature>
<feature type="disulfide bond" evidence="1">
    <location>
        <begin position="97"/>
        <end position="114"/>
    </location>
</feature>
<feature type="non-terminal residue">
    <location>
        <position position="1"/>
    </location>
</feature>
<accession>Q27018</accession>
<protein>
    <recommendedName>
        <fullName>B2 protein</fullName>
    </recommendedName>
</protein>
<evidence type="ECO:0000250" key="1"/>
<evidence type="ECO:0000255" key="2"/>
<evidence type="ECO:0000305" key="3"/>
<keyword id="KW-1015">Disulfide bond</keyword>
<keyword id="KW-0325">Glycoprotein</keyword>
<keyword id="KW-0964">Secreted</keyword>
<keyword id="KW-0732">Signal</keyword>
<sequence>SLILLVAVQALTEEDLQLLRQTSAECKTESGASEAVIKKARKGDLEDDPKLKMQLLCIFKALEIVAESGEIEADTFKEKLTRVTNDDEESEKIVEKCTVTEDTPEDTAFEVTKCVLKDKPNFFGDLFV</sequence>
<name>B2_TENMO</name>
<dbReference type="EMBL" id="M97917">
    <property type="protein sequence ID" value="AAC41572.1"/>
    <property type="molecule type" value="mRNA"/>
</dbReference>
<dbReference type="SMR" id="Q27018"/>
<dbReference type="GO" id="GO:0005615">
    <property type="term" value="C:extracellular space"/>
    <property type="evidence" value="ECO:0007669"/>
    <property type="project" value="TreeGrafter"/>
</dbReference>
<dbReference type="GO" id="GO:0005549">
    <property type="term" value="F:odorant binding"/>
    <property type="evidence" value="ECO:0007669"/>
    <property type="project" value="InterPro"/>
</dbReference>
<dbReference type="GO" id="GO:0007608">
    <property type="term" value="P:sensory perception of smell"/>
    <property type="evidence" value="ECO:0007669"/>
    <property type="project" value="TreeGrafter"/>
</dbReference>
<dbReference type="CDD" id="cd23992">
    <property type="entry name" value="PBP_GOBP"/>
    <property type="match status" value="1"/>
</dbReference>
<dbReference type="FunFam" id="1.10.238.20:FF:000001">
    <property type="entry name" value="General odorant-binding protein lush"/>
    <property type="match status" value="1"/>
</dbReference>
<dbReference type="Gene3D" id="1.10.238.20">
    <property type="entry name" value="Pheromone/general odorant binding protein domain"/>
    <property type="match status" value="1"/>
</dbReference>
<dbReference type="InterPro" id="IPR006170">
    <property type="entry name" value="PBP/GOBP"/>
</dbReference>
<dbReference type="InterPro" id="IPR036728">
    <property type="entry name" value="PBP_GOBP_sf"/>
</dbReference>
<dbReference type="PANTHER" id="PTHR11857:SF43">
    <property type="entry name" value="GEO07291P1-RELATED"/>
    <property type="match status" value="1"/>
</dbReference>
<dbReference type="PANTHER" id="PTHR11857">
    <property type="entry name" value="ODORANT BINDING PROTEIN-RELATED"/>
    <property type="match status" value="1"/>
</dbReference>
<dbReference type="Pfam" id="PF01395">
    <property type="entry name" value="PBP_GOBP"/>
    <property type="match status" value="1"/>
</dbReference>
<dbReference type="SMART" id="SM00708">
    <property type="entry name" value="PhBP"/>
    <property type="match status" value="1"/>
</dbReference>
<dbReference type="SUPFAM" id="SSF47565">
    <property type="entry name" value="Insect pheromone/odorant-binding proteins"/>
    <property type="match status" value="1"/>
</dbReference>
<comment type="function">
    <text>May be a carrier protein for lipids.</text>
</comment>
<comment type="subcellular location">
    <subcellularLocation>
        <location evidence="3">Secreted</location>
    </subcellularLocation>
</comment>
<comment type="tissue specificity">
    <text>Tubular accessory sex gland.</text>
</comment>
<comment type="PTM">
    <text>N-glycosylated.</text>
</comment>
<comment type="similarity">
    <text evidence="3">Belongs to the PBP/GOBP family.</text>
</comment>
<proteinExistence type="evidence at transcript level"/>